<comment type="function">
    <text evidence="1">This is one of the proteins that bind and probably mediate the attachment of the 5S RNA into the large ribosomal subunit, where it forms part of the central protuberance.</text>
</comment>
<comment type="subunit">
    <text evidence="1">Part of the 50S ribosomal subunit; part of the 5S rRNA/L5/L18/L25 subcomplex. Contacts the 5S and 23S rRNAs.</text>
</comment>
<comment type="similarity">
    <text evidence="1">Belongs to the universal ribosomal protein uL18 family.</text>
</comment>
<keyword id="KW-0687">Ribonucleoprotein</keyword>
<keyword id="KW-0689">Ribosomal protein</keyword>
<keyword id="KW-0694">RNA-binding</keyword>
<keyword id="KW-0699">rRNA-binding</keyword>
<evidence type="ECO:0000255" key="1">
    <source>
        <dbReference type="HAMAP-Rule" id="MF_01337"/>
    </source>
</evidence>
<evidence type="ECO:0000305" key="2"/>
<proteinExistence type="inferred from homology"/>
<protein>
    <recommendedName>
        <fullName evidence="1">Large ribosomal subunit protein uL18</fullName>
    </recommendedName>
    <alternativeName>
        <fullName evidence="2">50S ribosomal protein L18</fullName>
    </alternativeName>
</protein>
<organism>
    <name type="scientific">Acinetobacter baumannii (strain ATCC 17978 / DSM 105126 / CIP 53.77 / LMG 1025 / NCDC KC755 / 5377)</name>
    <dbReference type="NCBI Taxonomy" id="400667"/>
    <lineage>
        <taxon>Bacteria</taxon>
        <taxon>Pseudomonadati</taxon>
        <taxon>Pseudomonadota</taxon>
        <taxon>Gammaproteobacteria</taxon>
        <taxon>Moraxellales</taxon>
        <taxon>Moraxellaceae</taxon>
        <taxon>Acinetobacter</taxon>
        <taxon>Acinetobacter calcoaceticus/baumannii complex</taxon>
    </lineage>
</organism>
<gene>
    <name evidence="1" type="primary">rplR</name>
    <name type="ordered locus">A1S_3065</name>
</gene>
<sequence length="116" mass="12418">MNEKKQSRLRRAKSTRLHIRALGATRLCVNRTPRHIYAQVISADGGKVLAQASTLDASLRSGTTGNIEAATKVGALIAERAKAAGVTKVAFDRSGFKYHGRIKALADAAREGGLEF</sequence>
<feature type="chain" id="PRO_1000142607" description="Large ribosomal subunit protein uL18">
    <location>
        <begin position="1"/>
        <end position="116"/>
    </location>
</feature>
<accession>A3M968</accession>
<name>RL18_ACIBT</name>
<reference key="1">
    <citation type="journal article" date="2007" name="Genes Dev.">
        <title>New insights into Acinetobacter baumannii pathogenesis revealed by high-density pyrosequencing and transposon mutagenesis.</title>
        <authorList>
            <person name="Smith M.G."/>
            <person name="Gianoulis T.A."/>
            <person name="Pukatzki S."/>
            <person name="Mekalanos J.J."/>
            <person name="Ornston L.N."/>
            <person name="Gerstein M."/>
            <person name="Snyder M."/>
        </authorList>
    </citation>
    <scope>NUCLEOTIDE SEQUENCE [LARGE SCALE GENOMIC DNA]</scope>
    <source>
        <strain>ATCC 17978 / DSM 105126 / CIP 53.77 / LMG 1025 / NCDC KC755 / 5377</strain>
    </source>
</reference>
<dbReference type="EMBL" id="CP000521">
    <property type="protein sequence ID" value="ABO13462.2"/>
    <property type="molecule type" value="Genomic_DNA"/>
</dbReference>
<dbReference type="RefSeq" id="WP_001003194.1">
    <property type="nucleotide sequence ID" value="NZ_CP053098.1"/>
</dbReference>
<dbReference type="SMR" id="A3M968"/>
<dbReference type="GeneID" id="92895301"/>
<dbReference type="KEGG" id="acb:A1S_3065"/>
<dbReference type="HOGENOM" id="CLU_098841_0_1_6"/>
<dbReference type="GO" id="GO:0022625">
    <property type="term" value="C:cytosolic large ribosomal subunit"/>
    <property type="evidence" value="ECO:0007669"/>
    <property type="project" value="TreeGrafter"/>
</dbReference>
<dbReference type="GO" id="GO:0008097">
    <property type="term" value="F:5S rRNA binding"/>
    <property type="evidence" value="ECO:0007669"/>
    <property type="project" value="TreeGrafter"/>
</dbReference>
<dbReference type="GO" id="GO:0003735">
    <property type="term" value="F:structural constituent of ribosome"/>
    <property type="evidence" value="ECO:0007669"/>
    <property type="project" value="InterPro"/>
</dbReference>
<dbReference type="GO" id="GO:0006412">
    <property type="term" value="P:translation"/>
    <property type="evidence" value="ECO:0007669"/>
    <property type="project" value="UniProtKB-UniRule"/>
</dbReference>
<dbReference type="CDD" id="cd00432">
    <property type="entry name" value="Ribosomal_L18_L5e"/>
    <property type="match status" value="1"/>
</dbReference>
<dbReference type="FunFam" id="3.30.420.100:FF:000001">
    <property type="entry name" value="50S ribosomal protein L18"/>
    <property type="match status" value="1"/>
</dbReference>
<dbReference type="Gene3D" id="3.30.420.100">
    <property type="match status" value="1"/>
</dbReference>
<dbReference type="HAMAP" id="MF_01337_B">
    <property type="entry name" value="Ribosomal_uL18_B"/>
    <property type="match status" value="1"/>
</dbReference>
<dbReference type="InterPro" id="IPR004389">
    <property type="entry name" value="Ribosomal_uL18_bac-type"/>
</dbReference>
<dbReference type="InterPro" id="IPR005484">
    <property type="entry name" value="Ribosomal_uL18_bac/euk"/>
</dbReference>
<dbReference type="NCBIfam" id="TIGR00060">
    <property type="entry name" value="L18_bact"/>
    <property type="match status" value="1"/>
</dbReference>
<dbReference type="PANTHER" id="PTHR12899">
    <property type="entry name" value="39S RIBOSOMAL PROTEIN L18, MITOCHONDRIAL"/>
    <property type="match status" value="1"/>
</dbReference>
<dbReference type="PANTHER" id="PTHR12899:SF3">
    <property type="entry name" value="LARGE RIBOSOMAL SUBUNIT PROTEIN UL18M"/>
    <property type="match status" value="1"/>
</dbReference>
<dbReference type="Pfam" id="PF00861">
    <property type="entry name" value="Ribosomal_L18p"/>
    <property type="match status" value="1"/>
</dbReference>
<dbReference type="SUPFAM" id="SSF53137">
    <property type="entry name" value="Translational machinery components"/>
    <property type="match status" value="1"/>
</dbReference>